<reference key="1">
    <citation type="submission" date="2008-06" db="EMBL/GenBank/DDBJ databases">
        <title>Complete sequence of Chlorobaculum parvum NCIB 8327.</title>
        <authorList>
            <consortium name="US DOE Joint Genome Institute"/>
            <person name="Lucas S."/>
            <person name="Copeland A."/>
            <person name="Lapidus A."/>
            <person name="Glavina del Rio T."/>
            <person name="Dalin E."/>
            <person name="Tice H."/>
            <person name="Bruce D."/>
            <person name="Goodwin L."/>
            <person name="Pitluck S."/>
            <person name="Schmutz J."/>
            <person name="Larimer F."/>
            <person name="Land M."/>
            <person name="Hauser L."/>
            <person name="Kyrpides N."/>
            <person name="Mikhailova N."/>
            <person name="Zhao F."/>
            <person name="Li T."/>
            <person name="Liu Z."/>
            <person name="Overmann J."/>
            <person name="Bryant D.A."/>
            <person name="Richardson P."/>
        </authorList>
    </citation>
    <scope>NUCLEOTIDE SEQUENCE [LARGE SCALE GENOMIC DNA]</scope>
    <source>
        <strain>DSM 263 / NCIMB 8327</strain>
    </source>
</reference>
<dbReference type="EMBL" id="CP001099">
    <property type="protein sequence ID" value="ACF10432.1"/>
    <property type="molecule type" value="Genomic_DNA"/>
</dbReference>
<dbReference type="RefSeq" id="WP_012501267.1">
    <property type="nucleotide sequence ID" value="NC_011027.1"/>
</dbReference>
<dbReference type="SMR" id="B3QQY5"/>
<dbReference type="STRING" id="517417.Cpar_0003"/>
<dbReference type="KEGG" id="cpc:Cpar_0003"/>
<dbReference type="eggNOG" id="COG1195">
    <property type="taxonomic scope" value="Bacteria"/>
</dbReference>
<dbReference type="HOGENOM" id="CLU_040267_0_1_10"/>
<dbReference type="OrthoDB" id="9803889at2"/>
<dbReference type="Proteomes" id="UP000008811">
    <property type="component" value="Chromosome"/>
</dbReference>
<dbReference type="GO" id="GO:0005737">
    <property type="term" value="C:cytoplasm"/>
    <property type="evidence" value="ECO:0007669"/>
    <property type="project" value="UniProtKB-SubCell"/>
</dbReference>
<dbReference type="GO" id="GO:0005524">
    <property type="term" value="F:ATP binding"/>
    <property type="evidence" value="ECO:0007669"/>
    <property type="project" value="UniProtKB-UniRule"/>
</dbReference>
<dbReference type="GO" id="GO:0016887">
    <property type="term" value="F:ATP hydrolysis activity"/>
    <property type="evidence" value="ECO:0007669"/>
    <property type="project" value="InterPro"/>
</dbReference>
<dbReference type="GO" id="GO:0003697">
    <property type="term" value="F:single-stranded DNA binding"/>
    <property type="evidence" value="ECO:0007669"/>
    <property type="project" value="UniProtKB-UniRule"/>
</dbReference>
<dbReference type="GO" id="GO:0006260">
    <property type="term" value="P:DNA replication"/>
    <property type="evidence" value="ECO:0007669"/>
    <property type="project" value="UniProtKB-UniRule"/>
</dbReference>
<dbReference type="GO" id="GO:0000731">
    <property type="term" value="P:DNA synthesis involved in DNA repair"/>
    <property type="evidence" value="ECO:0007669"/>
    <property type="project" value="TreeGrafter"/>
</dbReference>
<dbReference type="GO" id="GO:0006302">
    <property type="term" value="P:double-strand break repair"/>
    <property type="evidence" value="ECO:0007669"/>
    <property type="project" value="InterPro"/>
</dbReference>
<dbReference type="GO" id="GO:0009432">
    <property type="term" value="P:SOS response"/>
    <property type="evidence" value="ECO:0007669"/>
    <property type="project" value="UniProtKB-UniRule"/>
</dbReference>
<dbReference type="Gene3D" id="3.40.50.300">
    <property type="entry name" value="P-loop containing nucleotide triphosphate hydrolases"/>
    <property type="match status" value="1"/>
</dbReference>
<dbReference type="Gene3D" id="1.20.1050.90">
    <property type="entry name" value="RecF/RecN/SMC, N-terminal domain"/>
    <property type="match status" value="1"/>
</dbReference>
<dbReference type="HAMAP" id="MF_00365">
    <property type="entry name" value="RecF"/>
    <property type="match status" value="1"/>
</dbReference>
<dbReference type="InterPro" id="IPR001238">
    <property type="entry name" value="DNA-binding_RecF"/>
</dbReference>
<dbReference type="InterPro" id="IPR018078">
    <property type="entry name" value="DNA-binding_RecF_CS"/>
</dbReference>
<dbReference type="InterPro" id="IPR027417">
    <property type="entry name" value="P-loop_NTPase"/>
</dbReference>
<dbReference type="InterPro" id="IPR038729">
    <property type="entry name" value="Rad50/SbcC_AAA"/>
</dbReference>
<dbReference type="InterPro" id="IPR042174">
    <property type="entry name" value="RecF_2"/>
</dbReference>
<dbReference type="NCBIfam" id="TIGR00611">
    <property type="entry name" value="recf"/>
    <property type="match status" value="1"/>
</dbReference>
<dbReference type="PANTHER" id="PTHR32182">
    <property type="entry name" value="DNA REPLICATION AND REPAIR PROTEIN RECF"/>
    <property type="match status" value="1"/>
</dbReference>
<dbReference type="PANTHER" id="PTHR32182:SF0">
    <property type="entry name" value="DNA REPLICATION AND REPAIR PROTEIN RECF"/>
    <property type="match status" value="1"/>
</dbReference>
<dbReference type="Pfam" id="PF13476">
    <property type="entry name" value="AAA_23"/>
    <property type="match status" value="1"/>
</dbReference>
<dbReference type="SUPFAM" id="SSF52540">
    <property type="entry name" value="P-loop containing nucleoside triphosphate hydrolases"/>
    <property type="match status" value="1"/>
</dbReference>
<dbReference type="PROSITE" id="PS00617">
    <property type="entry name" value="RECF_1"/>
    <property type="match status" value="1"/>
</dbReference>
<accession>B3QQY5</accession>
<proteinExistence type="inferred from homology"/>
<protein>
    <recommendedName>
        <fullName evidence="1">DNA replication and repair protein RecF</fullName>
    </recommendedName>
</protein>
<sequence>MRLDSISIANFRNHTLLEFEPGHSVTNIYGRNGSGKTSILEAIHYCALTRGFSGNNDREYLKFGEELFTIRSSFTSGQGIATKVSVAYSPKREKRILVNEQELQTFSSHIGTIPCVTFTPREMVIINGAPAERRRFIDTAICQYDRKYLSDLLLYRRILQQRNALLSSEQDPRFIDSALDVLTDQLVATATEIVLVRKRFIEHFTSMLGDVYQWIPEGAEPSILYQSSLGHHENLYEKDKIQQVFRERFETLKQQELQRRQTLAGPHRDDLQFYLNKREIRKYASQGQQRAFLVAMKMTLQGYLYEASGEIPITLLDDLFSELDEVVSGTMVETLATKGQVIITSTGKKEGKGISCFSVDDYKSSEEP</sequence>
<organism>
    <name type="scientific">Chlorobaculum parvum (strain DSM 263 / NCIMB 8327)</name>
    <name type="common">Chlorobium vibrioforme subsp. thiosulfatophilum</name>
    <dbReference type="NCBI Taxonomy" id="517417"/>
    <lineage>
        <taxon>Bacteria</taxon>
        <taxon>Pseudomonadati</taxon>
        <taxon>Chlorobiota</taxon>
        <taxon>Chlorobiia</taxon>
        <taxon>Chlorobiales</taxon>
        <taxon>Chlorobiaceae</taxon>
        <taxon>Chlorobaculum</taxon>
    </lineage>
</organism>
<comment type="function">
    <text evidence="1">The RecF protein is involved in DNA metabolism; it is required for DNA replication and normal SOS inducibility. RecF binds preferentially to single-stranded, linear DNA. It also seems to bind ATP.</text>
</comment>
<comment type="subcellular location">
    <subcellularLocation>
        <location evidence="1">Cytoplasm</location>
    </subcellularLocation>
</comment>
<comment type="similarity">
    <text evidence="1">Belongs to the RecF family.</text>
</comment>
<keyword id="KW-0067">ATP-binding</keyword>
<keyword id="KW-0963">Cytoplasm</keyword>
<keyword id="KW-0227">DNA damage</keyword>
<keyword id="KW-0234">DNA repair</keyword>
<keyword id="KW-0235">DNA replication</keyword>
<keyword id="KW-0238">DNA-binding</keyword>
<keyword id="KW-0547">Nucleotide-binding</keyword>
<keyword id="KW-0742">SOS response</keyword>
<name>RECF_CHLP8</name>
<evidence type="ECO:0000255" key="1">
    <source>
        <dbReference type="HAMAP-Rule" id="MF_00365"/>
    </source>
</evidence>
<gene>
    <name evidence="1" type="primary">recF</name>
    <name type="ordered locus">Cpar_0003</name>
</gene>
<feature type="chain" id="PRO_1000205475" description="DNA replication and repair protein RecF">
    <location>
        <begin position="1"/>
        <end position="368"/>
    </location>
</feature>
<feature type="binding site" evidence="1">
    <location>
        <begin position="30"/>
        <end position="37"/>
    </location>
    <ligand>
        <name>ATP</name>
        <dbReference type="ChEBI" id="CHEBI:30616"/>
    </ligand>
</feature>